<keyword id="KW-0007">Acetylation</keyword>
<keyword id="KW-0025">Alternative splicing</keyword>
<keyword id="KW-0963">Cytoplasm</keyword>
<keyword id="KW-0866">Nonsense-mediated mRNA decay</keyword>
<keyword id="KW-0539">Nucleus</keyword>
<keyword id="KW-0597">Phosphoprotein</keyword>
<keyword id="KW-1185">Reference proteome</keyword>
<keyword id="KW-0677">Repeat</keyword>
<keyword id="KW-0802">TPR repeat</keyword>
<proteinExistence type="evidence at transcript level"/>
<name>SMG7_MOUSE</name>
<feature type="initiator methionine" description="Removed" evidence="2">
    <location>
        <position position="1"/>
    </location>
</feature>
<feature type="chain" id="PRO_0000076325" description="Nonsense-mediated mRNA decay factor SMG7">
    <location>
        <begin position="2"/>
        <end position="1138"/>
    </location>
</feature>
<feature type="repeat" description="TPR 1">
    <location>
        <begin position="152"/>
        <end position="185"/>
    </location>
</feature>
<feature type="repeat" description="TPR 2">
    <location>
        <begin position="187"/>
        <end position="219"/>
    </location>
</feature>
<feature type="region of interest" description="Disordered" evidence="3">
    <location>
        <begin position="515"/>
        <end position="612"/>
    </location>
</feature>
<feature type="region of interest" description="Disordered" evidence="3">
    <location>
        <begin position="649"/>
        <end position="745"/>
    </location>
</feature>
<feature type="region of interest" description="Disordered" evidence="3">
    <location>
        <begin position="838"/>
        <end position="871"/>
    </location>
</feature>
<feature type="region of interest" description="Disordered" evidence="3">
    <location>
        <begin position="990"/>
        <end position="1090"/>
    </location>
</feature>
<feature type="region of interest" description="Disordered" evidence="3">
    <location>
        <begin position="1106"/>
        <end position="1138"/>
    </location>
</feature>
<feature type="compositionally biased region" description="Polar residues" evidence="3">
    <location>
        <begin position="525"/>
        <end position="537"/>
    </location>
</feature>
<feature type="compositionally biased region" description="Basic and acidic residues" evidence="3">
    <location>
        <begin position="548"/>
        <end position="582"/>
    </location>
</feature>
<feature type="compositionally biased region" description="Polar residues" evidence="3">
    <location>
        <begin position="584"/>
        <end position="597"/>
    </location>
</feature>
<feature type="compositionally biased region" description="Polar residues" evidence="3">
    <location>
        <begin position="649"/>
        <end position="673"/>
    </location>
</feature>
<feature type="compositionally biased region" description="Low complexity" evidence="3">
    <location>
        <begin position="674"/>
        <end position="721"/>
    </location>
</feature>
<feature type="compositionally biased region" description="Basic and acidic residues" evidence="3">
    <location>
        <begin position="854"/>
        <end position="868"/>
    </location>
</feature>
<feature type="compositionally biased region" description="Polar residues" evidence="3">
    <location>
        <begin position="990"/>
        <end position="999"/>
    </location>
</feature>
<feature type="compositionally biased region" description="Low complexity" evidence="3">
    <location>
        <begin position="1000"/>
        <end position="1026"/>
    </location>
</feature>
<feature type="compositionally biased region" description="Basic and acidic residues" evidence="3">
    <location>
        <begin position="1037"/>
        <end position="1051"/>
    </location>
</feature>
<feature type="compositionally biased region" description="Polar residues" evidence="3">
    <location>
        <begin position="1063"/>
        <end position="1082"/>
    </location>
</feature>
<feature type="compositionally biased region" description="Low complexity" evidence="3">
    <location>
        <begin position="1118"/>
        <end position="1132"/>
    </location>
</feature>
<feature type="modified residue" description="N-acetylserine" evidence="2">
    <location>
        <position position="2"/>
    </location>
</feature>
<feature type="modified residue" description="Phosphoserine" evidence="2">
    <location>
        <position position="519"/>
    </location>
</feature>
<feature type="modified residue" description="Phosphothreonine" evidence="2">
    <location>
        <position position="575"/>
    </location>
</feature>
<feature type="modified residue" description="Phosphoserine" evidence="2">
    <location>
        <position position="732"/>
    </location>
</feature>
<feature type="modified residue" description="Phosphoserine" evidence="2">
    <location>
        <position position="848"/>
    </location>
</feature>
<feature type="splice variant" id="VSP_016577" description="In isoform 2." evidence="4">
    <original>MSLQSAQYL</original>
    <variation>MRTENLKSEEHLKSSNI</variation>
    <location>
        <begin position="1"/>
        <end position="9"/>
    </location>
</feature>
<feature type="splice variant" id="VSP_016578" description="In isoform 3." evidence="5">
    <original>V</original>
    <variation>VRRDCSKGVTVTQEDGQKDSSKRRAETKRCTLGKLQETGKQSVAVQV</variation>
    <location>
        <position position="566"/>
    </location>
</feature>
<feature type="splice variant" id="VSP_016579" description="In isoform 3." evidence="5">
    <location>
        <begin position="866"/>
        <end position="915"/>
    </location>
</feature>
<feature type="sequence conflict" description="In Ref. 1; BAC97911." evidence="6" ref="1">
    <original>P</original>
    <variation>S</variation>
    <location>
        <position position="552"/>
    </location>
</feature>
<gene>
    <name evidence="7" type="primary">Smg7</name>
    <name evidence="2" type="synonym">Est1c</name>
    <name evidence="7" type="synonym">Kiaa0250</name>
</gene>
<protein>
    <recommendedName>
        <fullName evidence="7">Nonsense-mediated mRNA decay factor SMG7</fullName>
    </recommendedName>
    <alternativeName>
        <fullName evidence="2">SMG-7 homolog</fullName>
    </alternativeName>
</protein>
<dbReference type="EMBL" id="AK129101">
    <property type="protein sequence ID" value="BAC97911.1"/>
    <property type="status" value="ALT_INIT"/>
    <property type="molecule type" value="mRNA"/>
</dbReference>
<dbReference type="EMBL" id="BC082789">
    <property type="protein sequence ID" value="AAH82789.1"/>
    <property type="molecule type" value="mRNA"/>
</dbReference>
<dbReference type="EMBL" id="BC086651">
    <property type="protein sequence ID" value="AAH86651.1"/>
    <property type="molecule type" value="mRNA"/>
</dbReference>
<dbReference type="CCDS" id="CCDS35740.1">
    <molecule id="Q5RJH6-3"/>
</dbReference>
<dbReference type="CCDS" id="CCDS48394.1">
    <molecule id="Q5RJH6-2"/>
</dbReference>
<dbReference type="CCDS" id="CCDS48395.1">
    <molecule id="Q5RJH6-1"/>
</dbReference>
<dbReference type="RefSeq" id="NP_001005507.1">
    <molecule id="Q5RJH6-3"/>
    <property type="nucleotide sequence ID" value="NM_001005507.2"/>
</dbReference>
<dbReference type="RefSeq" id="NP_001153728.1">
    <molecule id="Q5RJH6-1"/>
    <property type="nucleotide sequence ID" value="NM_001160256.1"/>
</dbReference>
<dbReference type="RefSeq" id="NP_001153729.1">
    <molecule id="Q5RJH6-2"/>
    <property type="nucleotide sequence ID" value="NM_001160257.2"/>
</dbReference>
<dbReference type="RefSeq" id="XP_006529515.1">
    <property type="nucleotide sequence ID" value="XM_006529452.3"/>
</dbReference>
<dbReference type="RefSeq" id="XP_036019885.1">
    <molecule id="Q5RJH6-2"/>
    <property type="nucleotide sequence ID" value="XM_036163992.1"/>
</dbReference>
<dbReference type="SMR" id="Q5RJH6"/>
<dbReference type="BioGRID" id="230520">
    <property type="interactions" value="6"/>
</dbReference>
<dbReference type="FunCoup" id="Q5RJH6">
    <property type="interactions" value="4110"/>
</dbReference>
<dbReference type="STRING" id="10090.ENSMUSP00000041241"/>
<dbReference type="GlyGen" id="Q5RJH6">
    <property type="glycosylation" value="4 sites, 1 N-linked glycan (1 site), 1 O-linked glycan (3 sites)"/>
</dbReference>
<dbReference type="iPTMnet" id="Q5RJH6"/>
<dbReference type="PhosphoSitePlus" id="Q5RJH6"/>
<dbReference type="PaxDb" id="10090-ENSMUSP00000041241"/>
<dbReference type="PeptideAtlas" id="Q5RJH6"/>
<dbReference type="ProteomicsDB" id="261259">
    <molecule id="Q5RJH6-1"/>
</dbReference>
<dbReference type="ProteomicsDB" id="261260">
    <molecule id="Q5RJH6-2"/>
</dbReference>
<dbReference type="ProteomicsDB" id="261261">
    <molecule id="Q5RJH6-3"/>
</dbReference>
<dbReference type="Pumba" id="Q5RJH6"/>
<dbReference type="Antibodypedia" id="34445">
    <property type="antibodies" value="104 antibodies from 23 providers"/>
</dbReference>
<dbReference type="DNASU" id="226517"/>
<dbReference type="Ensembl" id="ENSMUST00000043560.15">
    <molecule id="Q5RJH6-2"/>
    <property type="protein sequence ID" value="ENSMUSP00000041241.9"/>
    <property type="gene ID" value="ENSMUSG00000042772.16"/>
</dbReference>
<dbReference type="Ensembl" id="ENSMUST00000073441.13">
    <molecule id="Q5RJH6-3"/>
    <property type="protein sequence ID" value="ENSMUSP00000073144.7"/>
    <property type="gene ID" value="ENSMUSG00000042772.16"/>
</dbReference>
<dbReference type="Ensembl" id="ENSMUST00000111836.4">
    <molecule id="Q5RJH6-1"/>
    <property type="protein sequence ID" value="ENSMUSP00000107467.3"/>
    <property type="gene ID" value="ENSMUSG00000042772.16"/>
</dbReference>
<dbReference type="GeneID" id="226517"/>
<dbReference type="KEGG" id="mmu:226517"/>
<dbReference type="UCSC" id="uc007czn.1">
    <molecule id="Q5RJH6-2"/>
    <property type="organism name" value="mouse"/>
</dbReference>
<dbReference type="UCSC" id="uc007czo.2">
    <molecule id="Q5RJH6-3"/>
    <property type="organism name" value="mouse"/>
</dbReference>
<dbReference type="UCSC" id="uc007czp.2">
    <molecule id="Q5RJH6-1"/>
    <property type="organism name" value="mouse"/>
</dbReference>
<dbReference type="AGR" id="MGI:2682334"/>
<dbReference type="CTD" id="9887"/>
<dbReference type="MGI" id="MGI:2682334">
    <property type="gene designation" value="Smg7"/>
</dbReference>
<dbReference type="VEuPathDB" id="HostDB:ENSMUSG00000042772"/>
<dbReference type="eggNOG" id="KOG2162">
    <property type="taxonomic scope" value="Eukaryota"/>
</dbReference>
<dbReference type="GeneTree" id="ENSGT00940000158333"/>
<dbReference type="HOGENOM" id="CLU_009299_0_0_1"/>
<dbReference type="InParanoid" id="Q5RJH6"/>
<dbReference type="OMA" id="WHQAGSA"/>
<dbReference type="PhylomeDB" id="Q5RJH6"/>
<dbReference type="TreeFam" id="TF327119"/>
<dbReference type="Reactome" id="R-MMU-975957">
    <property type="pathway name" value="Nonsense Mediated Decay (NMD) enhanced by the Exon Junction Complex (EJC)"/>
</dbReference>
<dbReference type="BioGRID-ORCS" id="226517">
    <property type="hits" value="20 hits in 81 CRISPR screens"/>
</dbReference>
<dbReference type="ChiTaRS" id="Smg7">
    <property type="organism name" value="mouse"/>
</dbReference>
<dbReference type="PRO" id="PR:Q5RJH6"/>
<dbReference type="Proteomes" id="UP000000589">
    <property type="component" value="Chromosome 1"/>
</dbReference>
<dbReference type="RNAct" id="Q5RJH6">
    <property type="molecule type" value="protein"/>
</dbReference>
<dbReference type="Bgee" id="ENSMUSG00000042772">
    <property type="expression patterns" value="Expressed in embryonic post-anal tail and 227 other cell types or tissues"/>
</dbReference>
<dbReference type="GO" id="GO:0005737">
    <property type="term" value="C:cytoplasm"/>
    <property type="evidence" value="ECO:0000250"/>
    <property type="project" value="HGNC-UCL"/>
</dbReference>
<dbReference type="GO" id="GO:0005829">
    <property type="term" value="C:cytosol"/>
    <property type="evidence" value="ECO:0007669"/>
    <property type="project" value="Ensembl"/>
</dbReference>
<dbReference type="GO" id="GO:0005634">
    <property type="term" value="C:nucleus"/>
    <property type="evidence" value="ECO:0000250"/>
    <property type="project" value="HGNC-UCL"/>
</dbReference>
<dbReference type="GO" id="GO:0051721">
    <property type="term" value="F:protein phosphatase 2A binding"/>
    <property type="evidence" value="ECO:0000250"/>
    <property type="project" value="HGNC-UCL"/>
</dbReference>
<dbReference type="GO" id="GO:0000184">
    <property type="term" value="P:nuclear-transcribed mRNA catabolic process, nonsense-mediated decay"/>
    <property type="evidence" value="ECO:0007669"/>
    <property type="project" value="UniProtKB-KW"/>
</dbReference>
<dbReference type="Gene3D" id="1.25.40.10">
    <property type="entry name" value="Tetratricopeptide repeat domain"/>
    <property type="match status" value="1"/>
</dbReference>
<dbReference type="InterPro" id="IPR018834">
    <property type="entry name" value="DNA/RNA-bd_Est1-type"/>
</dbReference>
<dbReference type="InterPro" id="IPR019458">
    <property type="entry name" value="Est1-like_N"/>
</dbReference>
<dbReference type="InterPro" id="IPR045153">
    <property type="entry name" value="Est1/Ebs1-like"/>
</dbReference>
<dbReference type="InterPro" id="IPR011990">
    <property type="entry name" value="TPR-like_helical_dom_sf"/>
</dbReference>
<dbReference type="PANTHER" id="PTHR15696:SF5">
    <property type="entry name" value="NONSENSE-MEDIATED MRNA DECAY FACTOR SMG7"/>
    <property type="match status" value="1"/>
</dbReference>
<dbReference type="PANTHER" id="PTHR15696">
    <property type="entry name" value="SMG-7 SUPPRESSOR WITH MORPHOLOGICAL EFFECT ON GENITALIA PROTEIN 7"/>
    <property type="match status" value="1"/>
</dbReference>
<dbReference type="Pfam" id="PF10374">
    <property type="entry name" value="EST1"/>
    <property type="match status" value="1"/>
</dbReference>
<dbReference type="Pfam" id="PF10373">
    <property type="entry name" value="EST1_DNA_bind"/>
    <property type="match status" value="1"/>
</dbReference>
<dbReference type="SUPFAM" id="SSF48452">
    <property type="entry name" value="TPR-like"/>
    <property type="match status" value="1"/>
</dbReference>
<evidence type="ECO:0000250" key="1"/>
<evidence type="ECO:0000250" key="2">
    <source>
        <dbReference type="UniProtKB" id="Q92540"/>
    </source>
</evidence>
<evidence type="ECO:0000256" key="3">
    <source>
        <dbReference type="SAM" id="MobiDB-lite"/>
    </source>
</evidence>
<evidence type="ECO:0000303" key="4">
    <source>
    </source>
</evidence>
<evidence type="ECO:0000303" key="5">
    <source>
    </source>
</evidence>
<evidence type="ECO:0000305" key="6"/>
<evidence type="ECO:0000312" key="7">
    <source>
        <dbReference type="MGI" id="MGI:2682334"/>
    </source>
</evidence>
<organism>
    <name type="scientific">Mus musculus</name>
    <name type="common">Mouse</name>
    <dbReference type="NCBI Taxonomy" id="10090"/>
    <lineage>
        <taxon>Eukaryota</taxon>
        <taxon>Metazoa</taxon>
        <taxon>Chordata</taxon>
        <taxon>Craniata</taxon>
        <taxon>Vertebrata</taxon>
        <taxon>Euteleostomi</taxon>
        <taxon>Mammalia</taxon>
        <taxon>Eutheria</taxon>
        <taxon>Euarchontoglires</taxon>
        <taxon>Glires</taxon>
        <taxon>Rodentia</taxon>
        <taxon>Myomorpha</taxon>
        <taxon>Muroidea</taxon>
        <taxon>Muridae</taxon>
        <taxon>Murinae</taxon>
        <taxon>Mus</taxon>
        <taxon>Mus</taxon>
    </lineage>
</organism>
<accession>Q5RJH6</accession>
<accession>Q63ZW5</accession>
<accession>Q6ZQF3</accession>
<sequence length="1138" mass="126841">MSLQSAQYLRQAEVLKAEMTDSKLGPAEVWTSRQALQDLYQKMLVTDLEYALDKKVEQDLWNHAFKNQITTLQGQAKNRANPNRSEVQANLSLFLEAASGFYTQLLQELCTVFNVDLPCRVKSSQLGIISNKQTHSSTIVKPQSSSCSYICQHCLVHLGDIARYRNQTSQAESYYRHAAQLVPSNGQPYNQLAILASSKGDHLTTIFYYCRSIAVKFPFPAASTNLQKALSKALESRDELKTKWGVSDFIKAFIKFHGHVYLSKSLEKLSPLREKLEEQFKRLLFQKAFNSQQLVHVTVINLFQLHHLRDFSNETEQHSYSQDEQLCWTQLLALFMSFLGILCKCPLQNDSQESNNAYPLPAVKVSMDWLRLRPRVFQEAVVDERQYIWPWLISLLNSFHPREDDLSNTNATPLPEEFELQGFLALRPSFRNLDFSKGHQGITGDKEGQQRRIRQQRLISIGKWIADNQPRLIQCENEVGKLLFITEIPELILEDPSEAKENLILQETSVVESLATDGSPGLKSVLSTGRNPSNSCDSGEKPVVTFKENIKPREVNQGRSFPPKEVKSQTELRKTPVSEARKTPVTQTPSQTSNSQFIPIHHPGAFPPLPSRPGFPPPTYVIPPPVAFSMGSGYTFPAGVSVPGTFLQSTAHSPAGNQVQAGKQSHIPYSQQRPSGPGPMNQGPQQSQPPSQPPLTSLPAQPTAQSTSQLQVQALAQQQQSPTKVIPALGKSPPHHSGFQQYQQADASKQLWNPPQVQSPLGKIMPVKQSYYLQTQDPIKLFEPSLQPPVIQQQPLEKKMKPFPMEPYNHNPSEVKVPEFYWDSSYSMADNRAVMAQQPNMDRRSKRSPGVFRPEQDPVPRMPFEDPKSSPLLPPDLLKSLAALEEEEELIFSNPPDLYPALLGPLASLPGRSLFKSLLEKPSELMSHSSSFLSLTGFSVNQERYPNSSMFNEVYGKNLTTSSKAELNPSVASQETSLYSLFEGTPWSPSLPASSDHSTPASQSPHSSNPSSLPSSPPTHNHNSAPFSNFGPIGTPDNRDRRPADRWKTDKPAMGGFGVDYLSATSSSESSWHQASTPSGTWTGHGPSMEDSSAVLMESLKSIWSSSMMHPGPSALEQLLMQQKQKQQRGQGAMNPPH</sequence>
<reference key="1">
    <citation type="journal article" date="2003" name="DNA Res.">
        <title>Prediction of the coding sequences of mouse homologues of KIAA gene: III. The complete nucleotide sequences of 500 mouse KIAA-homologous cDNAs identified by screening of terminal sequences of cDNA clones randomly sampled from size-fractionated libraries.</title>
        <authorList>
            <person name="Okazaki N."/>
            <person name="Kikuno R."/>
            <person name="Ohara R."/>
            <person name="Inamoto S."/>
            <person name="Koseki H."/>
            <person name="Hiraoka S."/>
            <person name="Saga Y."/>
            <person name="Nagase T."/>
            <person name="Ohara O."/>
            <person name="Koga H."/>
        </authorList>
    </citation>
    <scope>NUCLEOTIDE SEQUENCE [LARGE SCALE MRNA] (ISOFORM 2)</scope>
    <source>
        <tissue>Brain</tissue>
    </source>
</reference>
<reference key="2">
    <citation type="journal article" date="2004" name="Genome Res.">
        <title>The status, quality, and expansion of the NIH full-length cDNA project: the Mammalian Gene Collection (MGC).</title>
        <authorList>
            <consortium name="The MGC Project Team"/>
        </authorList>
    </citation>
    <scope>NUCLEOTIDE SEQUENCE [LARGE SCALE MRNA] (ISOFORMS 1 AND 3)</scope>
    <source>
        <strain>C57BL/6J</strain>
        <tissue>Brain</tissue>
        <tissue>Embryonic germ cell</tissue>
    </source>
</reference>
<comment type="function">
    <text evidence="1">Plays a role in nonsense-mediated mRNA decay. Recruits UPF1 to cytoplasmic mRNA decay bodies. Together with SMG5 is thought to provide a link to the mRNA degradation machinery involving exonucleolytic pathways, and to serve as an adapter for UPF1 to protein phosphatase 2A (PP2A), thereby triggering UPF1 dephosphorylation (By similarity).</text>
</comment>
<comment type="subunit">
    <text evidence="2">Part of a complex that contains SMG5, SMG7, PPP2CA, a short isoform of UPF3A (isoform UPF3AS, but not isoform UPF3AL) and phosphorylated UPF1 (By similarity). Interacts with DHX34; the interaction is RNA-independent (By similarity).</text>
</comment>
<comment type="subcellular location">
    <subcellularLocation>
        <location evidence="2">Cytoplasm</location>
    </subcellularLocation>
    <subcellularLocation>
        <location evidence="2">Nucleus</location>
    </subcellularLocation>
    <text evidence="2">Predominantly cytoplasmic, and nuclear. Shuttles between nucleus and cytoplasm.</text>
</comment>
<comment type="alternative products">
    <event type="alternative splicing"/>
    <isoform>
        <id>Q5RJH6-1</id>
        <name>1</name>
        <sequence type="displayed"/>
    </isoform>
    <isoform>
        <id>Q5RJH6-2</id>
        <name>2</name>
        <sequence type="described" ref="VSP_016577"/>
    </isoform>
    <isoform>
        <id>Q5RJH6-3</id>
        <name>3</name>
        <sequence type="described" ref="VSP_016578 VSP_016579"/>
    </isoform>
</comment>
<comment type="sequence caution" evidence="6">
    <conflict type="erroneous initiation">
        <sequence resource="EMBL-CDS" id="BAC97911"/>
    </conflict>
</comment>